<comment type="function">
    <text evidence="1">The glycine cleavage system catalyzes the degradation of glycine. The P protein binds the alpha-amino group of glycine through its pyridoxal phosphate cofactor; CO(2) is released and the remaining methylamine moiety is then transferred to the lipoamide cofactor of the H protein.</text>
</comment>
<comment type="catalytic activity">
    <reaction evidence="1">
        <text>N(6)-[(R)-lipoyl]-L-lysyl-[glycine-cleavage complex H protein] + glycine + H(+) = N(6)-[(R)-S(8)-aminomethyldihydrolipoyl]-L-lysyl-[glycine-cleavage complex H protein] + CO2</text>
        <dbReference type="Rhea" id="RHEA:24304"/>
        <dbReference type="Rhea" id="RHEA-COMP:10494"/>
        <dbReference type="Rhea" id="RHEA-COMP:10495"/>
        <dbReference type="ChEBI" id="CHEBI:15378"/>
        <dbReference type="ChEBI" id="CHEBI:16526"/>
        <dbReference type="ChEBI" id="CHEBI:57305"/>
        <dbReference type="ChEBI" id="CHEBI:83099"/>
        <dbReference type="ChEBI" id="CHEBI:83143"/>
        <dbReference type="EC" id="1.4.4.2"/>
    </reaction>
</comment>
<comment type="cofactor">
    <cofactor evidence="1">
        <name>pyridoxal 5'-phosphate</name>
        <dbReference type="ChEBI" id="CHEBI:597326"/>
    </cofactor>
</comment>
<comment type="subunit">
    <text evidence="1">The glycine cleavage system is composed of four proteins: P, T, L and H. In this organism, the P 'protein' is a heterodimer of two subunits.</text>
</comment>
<comment type="similarity">
    <text evidence="1">Belongs to the GcvP family. C-terminal subunit subfamily.</text>
</comment>
<accession>Q9HPK0</accession>
<gene>
    <name evidence="1" type="primary">gcvPB</name>
    <name type="synonym">gcvP2</name>
    <name type="ordered locus">VNG_1601G</name>
</gene>
<proteinExistence type="inferred from homology"/>
<evidence type="ECO:0000255" key="1">
    <source>
        <dbReference type="HAMAP-Rule" id="MF_00713"/>
    </source>
</evidence>
<evidence type="ECO:0000256" key="2">
    <source>
        <dbReference type="SAM" id="MobiDB-lite"/>
    </source>
</evidence>
<feature type="chain" id="PRO_0000167026" description="Probable glycine dehydrogenase (decarboxylating) subunit 2">
    <location>
        <begin position="1"/>
        <end position="473"/>
    </location>
</feature>
<feature type="region of interest" description="Disordered" evidence="2">
    <location>
        <begin position="1"/>
        <end position="40"/>
    </location>
</feature>
<feature type="modified residue" description="N6-(pyridoxal phosphate)lysine" evidence="1">
    <location>
        <position position="270"/>
    </location>
</feature>
<dbReference type="EC" id="1.4.4.2" evidence="1"/>
<dbReference type="EMBL" id="AE004437">
    <property type="protein sequence ID" value="AAG19867.1"/>
    <property type="molecule type" value="Genomic_DNA"/>
</dbReference>
<dbReference type="PIR" id="G84312">
    <property type="entry name" value="G84312"/>
</dbReference>
<dbReference type="RefSeq" id="WP_010903165.1">
    <property type="nucleotide sequence ID" value="NC_002607.1"/>
</dbReference>
<dbReference type="SMR" id="Q9HPK0"/>
<dbReference type="STRING" id="64091.VNG_1601G"/>
<dbReference type="PaxDb" id="64091-VNG_1601G"/>
<dbReference type="GeneID" id="68694281"/>
<dbReference type="KEGG" id="hal:VNG_1601G"/>
<dbReference type="PATRIC" id="fig|64091.14.peg.1220"/>
<dbReference type="HOGENOM" id="CLU_004620_5_0_2"/>
<dbReference type="InParanoid" id="Q9HPK0"/>
<dbReference type="OrthoDB" id="371967at2157"/>
<dbReference type="PhylomeDB" id="Q9HPK0"/>
<dbReference type="Proteomes" id="UP000000554">
    <property type="component" value="Chromosome"/>
</dbReference>
<dbReference type="GO" id="GO:0005829">
    <property type="term" value="C:cytosol"/>
    <property type="evidence" value="ECO:0000318"/>
    <property type="project" value="GO_Central"/>
</dbReference>
<dbReference type="GO" id="GO:0005960">
    <property type="term" value="C:glycine cleavage complex"/>
    <property type="evidence" value="ECO:0000318"/>
    <property type="project" value="GO_Central"/>
</dbReference>
<dbReference type="GO" id="GO:0016594">
    <property type="term" value="F:glycine binding"/>
    <property type="evidence" value="ECO:0000318"/>
    <property type="project" value="GO_Central"/>
</dbReference>
<dbReference type="GO" id="GO:0004375">
    <property type="term" value="F:glycine dehydrogenase (decarboxylating) activity"/>
    <property type="evidence" value="ECO:0000318"/>
    <property type="project" value="GO_Central"/>
</dbReference>
<dbReference type="GO" id="GO:0030170">
    <property type="term" value="F:pyridoxal phosphate binding"/>
    <property type="evidence" value="ECO:0000318"/>
    <property type="project" value="GO_Central"/>
</dbReference>
<dbReference type="GO" id="GO:0019464">
    <property type="term" value="P:glycine decarboxylation via glycine cleavage system"/>
    <property type="evidence" value="ECO:0000318"/>
    <property type="project" value="GO_Central"/>
</dbReference>
<dbReference type="FunFam" id="3.40.640.10:FF:000224">
    <property type="entry name" value="Probable glycine dehydrogenase (decarboxylating) subunit 2"/>
    <property type="match status" value="1"/>
</dbReference>
<dbReference type="Gene3D" id="6.20.440.10">
    <property type="match status" value="1"/>
</dbReference>
<dbReference type="Gene3D" id="3.90.1150.10">
    <property type="entry name" value="Aspartate Aminotransferase, domain 1"/>
    <property type="match status" value="1"/>
</dbReference>
<dbReference type="Gene3D" id="3.40.640.10">
    <property type="entry name" value="Type I PLP-dependent aspartate aminotransferase-like (Major domain)"/>
    <property type="match status" value="1"/>
</dbReference>
<dbReference type="HAMAP" id="MF_00713">
    <property type="entry name" value="GcvPB"/>
    <property type="match status" value="1"/>
</dbReference>
<dbReference type="InterPro" id="IPR000192">
    <property type="entry name" value="Aminotrans_V_dom"/>
</dbReference>
<dbReference type="InterPro" id="IPR023012">
    <property type="entry name" value="GcvPB"/>
</dbReference>
<dbReference type="InterPro" id="IPR049316">
    <property type="entry name" value="GDC-P_C"/>
</dbReference>
<dbReference type="InterPro" id="IPR020581">
    <property type="entry name" value="GDC_P"/>
</dbReference>
<dbReference type="InterPro" id="IPR015424">
    <property type="entry name" value="PyrdxlP-dep_Trfase"/>
</dbReference>
<dbReference type="InterPro" id="IPR015421">
    <property type="entry name" value="PyrdxlP-dep_Trfase_major"/>
</dbReference>
<dbReference type="InterPro" id="IPR015422">
    <property type="entry name" value="PyrdxlP-dep_Trfase_small"/>
</dbReference>
<dbReference type="NCBIfam" id="NF003346">
    <property type="entry name" value="PRK04366.1"/>
    <property type="match status" value="1"/>
</dbReference>
<dbReference type="PANTHER" id="PTHR11773:SF1">
    <property type="entry name" value="GLYCINE DEHYDROGENASE (DECARBOXYLATING), MITOCHONDRIAL"/>
    <property type="match status" value="1"/>
</dbReference>
<dbReference type="PANTHER" id="PTHR11773">
    <property type="entry name" value="GLYCINE DEHYDROGENASE, DECARBOXYLATING"/>
    <property type="match status" value="1"/>
</dbReference>
<dbReference type="Pfam" id="PF00266">
    <property type="entry name" value="Aminotran_5"/>
    <property type="match status" value="1"/>
</dbReference>
<dbReference type="Pfam" id="PF21478">
    <property type="entry name" value="GcvP2_C"/>
    <property type="match status" value="1"/>
</dbReference>
<dbReference type="SUPFAM" id="SSF53383">
    <property type="entry name" value="PLP-dependent transferases"/>
    <property type="match status" value="1"/>
</dbReference>
<protein>
    <recommendedName>
        <fullName evidence="1">Probable glycine dehydrogenase (decarboxylating) subunit 2</fullName>
        <ecNumber evidence="1">1.4.4.2</ecNumber>
    </recommendedName>
    <alternativeName>
        <fullName evidence="1">Glycine cleavage system P-protein subunit 2</fullName>
    </alternativeName>
    <alternativeName>
        <fullName evidence="1">Glycine decarboxylase subunit 2</fullName>
    </alternativeName>
    <alternativeName>
        <fullName evidence="1">Glycine dehydrogenase (aminomethyl-transferring) subunit 2</fullName>
    </alternativeName>
</protein>
<sequence length="473" mass="50487">MEHYEQARYAPAEGETNEPLLSENDQTTVSVDPSLPDDLTRDTVELPSLEEPELARHYVRLSQQNYGVDSGPYPLGSCTMKYNPRFTEDAAALPAAAVHPDRSETALQGTLAVMHDLQDYLGRIGGMDAVTLQPPAGAAGEFTGILIAEAYHEATDGGHRNEVIVPDAAHGTNFASAALGGYDVIELPSGDDGRVDLDALEAALGENTAALMLTNPNTLGLFERDIEPIAEMVHDAGGLLYYDGANLNALLGRARPGDMGFDIMHFNVHKTFATPHGGGGPGAGPVGVTDELAGFLPDPHVRQSAGGDYELYTPPRSIGKVHGFQGNWPVLVKAFAYIDRLGDSGLADASAKAVLNANYLADQLDYEIPLGPFHHEFVASAGDQDAADVAKRMLDYGVHPPTTKWPELVAEALMTEPTETESKRTLDDLADAFNAVAGDDDAALADAPSRTTARRIDQTAAARNPRLSWHDLD</sequence>
<keyword id="KW-0560">Oxidoreductase</keyword>
<keyword id="KW-0663">Pyridoxal phosphate</keyword>
<keyword id="KW-1185">Reference proteome</keyword>
<organism>
    <name type="scientific">Halobacterium salinarum (strain ATCC 700922 / JCM 11081 / NRC-1)</name>
    <name type="common">Halobacterium halobium</name>
    <dbReference type="NCBI Taxonomy" id="64091"/>
    <lineage>
        <taxon>Archaea</taxon>
        <taxon>Methanobacteriati</taxon>
        <taxon>Methanobacteriota</taxon>
        <taxon>Stenosarchaea group</taxon>
        <taxon>Halobacteria</taxon>
        <taxon>Halobacteriales</taxon>
        <taxon>Halobacteriaceae</taxon>
        <taxon>Halobacterium</taxon>
        <taxon>Halobacterium salinarum NRC-34001</taxon>
    </lineage>
</organism>
<name>GCSPB_HALSA</name>
<reference key="1">
    <citation type="journal article" date="2000" name="Proc. Natl. Acad. Sci. U.S.A.">
        <title>Genome sequence of Halobacterium species NRC-1.</title>
        <authorList>
            <person name="Ng W.V."/>
            <person name="Kennedy S.P."/>
            <person name="Mahairas G.G."/>
            <person name="Berquist B."/>
            <person name="Pan M."/>
            <person name="Shukla H.D."/>
            <person name="Lasky S.R."/>
            <person name="Baliga N.S."/>
            <person name="Thorsson V."/>
            <person name="Sbrogna J."/>
            <person name="Swartzell S."/>
            <person name="Weir D."/>
            <person name="Hall J."/>
            <person name="Dahl T.A."/>
            <person name="Welti R."/>
            <person name="Goo Y.A."/>
            <person name="Leithauser B."/>
            <person name="Keller K."/>
            <person name="Cruz R."/>
            <person name="Danson M.J."/>
            <person name="Hough D.W."/>
            <person name="Maddocks D.G."/>
            <person name="Jablonski P.E."/>
            <person name="Krebs M.P."/>
            <person name="Angevine C.M."/>
            <person name="Dale H."/>
            <person name="Isenbarger T.A."/>
            <person name="Peck R.F."/>
            <person name="Pohlschroder M."/>
            <person name="Spudich J.L."/>
            <person name="Jung K.-H."/>
            <person name="Alam M."/>
            <person name="Freitas T."/>
            <person name="Hou S."/>
            <person name="Daniels C.J."/>
            <person name="Dennis P.P."/>
            <person name="Omer A.D."/>
            <person name="Ebhardt H."/>
            <person name="Lowe T.M."/>
            <person name="Liang P."/>
            <person name="Riley M."/>
            <person name="Hood L."/>
            <person name="DasSarma S."/>
        </authorList>
    </citation>
    <scope>NUCLEOTIDE SEQUENCE [LARGE SCALE GENOMIC DNA]</scope>
    <source>
        <strain>ATCC 700922 / JCM 11081 / NRC-1</strain>
    </source>
</reference>